<gene>
    <name evidence="1" type="primary">ribH</name>
    <name type="ordered locus">Mjls_2432</name>
</gene>
<dbReference type="EC" id="2.5.1.78" evidence="1"/>
<dbReference type="EMBL" id="CP000580">
    <property type="protein sequence ID" value="ABN98216.1"/>
    <property type="molecule type" value="Genomic_DNA"/>
</dbReference>
<dbReference type="SMR" id="A3PZ89"/>
<dbReference type="KEGG" id="mjl:Mjls_2432"/>
<dbReference type="HOGENOM" id="CLU_089358_1_2_11"/>
<dbReference type="BioCyc" id="MSP164757:G1G8C-2451-MONOMER"/>
<dbReference type="UniPathway" id="UPA00275">
    <property type="reaction ID" value="UER00404"/>
</dbReference>
<dbReference type="GO" id="GO:0005829">
    <property type="term" value="C:cytosol"/>
    <property type="evidence" value="ECO:0007669"/>
    <property type="project" value="TreeGrafter"/>
</dbReference>
<dbReference type="GO" id="GO:0009349">
    <property type="term" value="C:riboflavin synthase complex"/>
    <property type="evidence" value="ECO:0007669"/>
    <property type="project" value="InterPro"/>
</dbReference>
<dbReference type="GO" id="GO:0000906">
    <property type="term" value="F:6,7-dimethyl-8-ribityllumazine synthase activity"/>
    <property type="evidence" value="ECO:0007669"/>
    <property type="project" value="UniProtKB-UniRule"/>
</dbReference>
<dbReference type="GO" id="GO:0009231">
    <property type="term" value="P:riboflavin biosynthetic process"/>
    <property type="evidence" value="ECO:0007669"/>
    <property type="project" value="UniProtKB-UniRule"/>
</dbReference>
<dbReference type="CDD" id="cd09209">
    <property type="entry name" value="Lumazine_synthase-I"/>
    <property type="match status" value="1"/>
</dbReference>
<dbReference type="Gene3D" id="3.40.50.960">
    <property type="entry name" value="Lumazine/riboflavin synthase"/>
    <property type="match status" value="1"/>
</dbReference>
<dbReference type="HAMAP" id="MF_00178">
    <property type="entry name" value="Lumazine_synth"/>
    <property type="match status" value="1"/>
</dbReference>
<dbReference type="InterPro" id="IPR034964">
    <property type="entry name" value="LS"/>
</dbReference>
<dbReference type="InterPro" id="IPR002180">
    <property type="entry name" value="LS/RS"/>
</dbReference>
<dbReference type="InterPro" id="IPR036467">
    <property type="entry name" value="LS/RS_sf"/>
</dbReference>
<dbReference type="NCBIfam" id="TIGR00114">
    <property type="entry name" value="lumazine-synth"/>
    <property type="match status" value="1"/>
</dbReference>
<dbReference type="PANTHER" id="PTHR21058:SF0">
    <property type="entry name" value="6,7-DIMETHYL-8-RIBITYLLUMAZINE SYNTHASE"/>
    <property type="match status" value="1"/>
</dbReference>
<dbReference type="PANTHER" id="PTHR21058">
    <property type="entry name" value="6,7-DIMETHYL-8-RIBITYLLUMAZINE SYNTHASE DMRL SYNTHASE LUMAZINE SYNTHASE"/>
    <property type="match status" value="1"/>
</dbReference>
<dbReference type="Pfam" id="PF00885">
    <property type="entry name" value="DMRL_synthase"/>
    <property type="match status" value="1"/>
</dbReference>
<dbReference type="SUPFAM" id="SSF52121">
    <property type="entry name" value="Lumazine synthase"/>
    <property type="match status" value="1"/>
</dbReference>
<name>RISB_MYCSJ</name>
<proteinExistence type="inferred from homology"/>
<accession>A3PZ89</accession>
<feature type="chain" id="PRO_1000040455" description="6,7-dimethyl-8-ribityllumazine synthase">
    <location>
        <begin position="1"/>
        <end position="160"/>
    </location>
</feature>
<feature type="active site" description="Proton donor" evidence="1">
    <location>
        <position position="89"/>
    </location>
</feature>
<feature type="binding site" evidence="1">
    <location>
        <position position="27"/>
    </location>
    <ligand>
        <name>5-amino-6-(D-ribitylamino)uracil</name>
        <dbReference type="ChEBI" id="CHEBI:15934"/>
    </ligand>
</feature>
<feature type="binding site" evidence="1">
    <location>
        <begin position="59"/>
        <end position="61"/>
    </location>
    <ligand>
        <name>5-amino-6-(D-ribitylamino)uracil</name>
        <dbReference type="ChEBI" id="CHEBI:15934"/>
    </ligand>
</feature>
<feature type="binding site" evidence="1">
    <location>
        <begin position="81"/>
        <end position="83"/>
    </location>
    <ligand>
        <name>5-amino-6-(D-ribitylamino)uracil</name>
        <dbReference type="ChEBI" id="CHEBI:15934"/>
    </ligand>
</feature>
<feature type="binding site" evidence="1">
    <location>
        <begin position="86"/>
        <end position="87"/>
    </location>
    <ligand>
        <name>(2S)-2-hydroxy-3-oxobutyl phosphate</name>
        <dbReference type="ChEBI" id="CHEBI:58830"/>
    </ligand>
</feature>
<feature type="binding site" evidence="1">
    <location>
        <position position="114"/>
    </location>
    <ligand>
        <name>5-amino-6-(D-ribitylamino)uracil</name>
        <dbReference type="ChEBI" id="CHEBI:15934"/>
    </ligand>
</feature>
<feature type="binding site" evidence="1">
    <location>
        <position position="128"/>
    </location>
    <ligand>
        <name>(2S)-2-hydroxy-3-oxobutyl phosphate</name>
        <dbReference type="ChEBI" id="CHEBI:58830"/>
    </ligand>
</feature>
<organism>
    <name type="scientific">Mycobacterium sp. (strain JLS)</name>
    <dbReference type="NCBI Taxonomy" id="164757"/>
    <lineage>
        <taxon>Bacteria</taxon>
        <taxon>Bacillati</taxon>
        <taxon>Actinomycetota</taxon>
        <taxon>Actinomycetes</taxon>
        <taxon>Mycobacteriales</taxon>
        <taxon>Mycobacteriaceae</taxon>
        <taxon>Mycobacterium</taxon>
    </lineage>
</organism>
<comment type="function">
    <text evidence="1">Catalyzes the formation of 6,7-dimethyl-8-ribityllumazine by condensation of 5-amino-6-(D-ribitylamino)uracil with 3,4-dihydroxy-2-butanone 4-phosphate. This is the penultimate step in the biosynthesis of riboflavin.</text>
</comment>
<comment type="catalytic activity">
    <reaction evidence="1">
        <text>(2S)-2-hydroxy-3-oxobutyl phosphate + 5-amino-6-(D-ribitylamino)uracil = 6,7-dimethyl-8-(1-D-ribityl)lumazine + phosphate + 2 H2O + H(+)</text>
        <dbReference type="Rhea" id="RHEA:26152"/>
        <dbReference type="ChEBI" id="CHEBI:15377"/>
        <dbReference type="ChEBI" id="CHEBI:15378"/>
        <dbReference type="ChEBI" id="CHEBI:15934"/>
        <dbReference type="ChEBI" id="CHEBI:43474"/>
        <dbReference type="ChEBI" id="CHEBI:58201"/>
        <dbReference type="ChEBI" id="CHEBI:58830"/>
        <dbReference type="EC" id="2.5.1.78"/>
    </reaction>
</comment>
<comment type="pathway">
    <text evidence="1">Cofactor biosynthesis; riboflavin biosynthesis; riboflavin from 2-hydroxy-3-oxobutyl phosphate and 5-amino-6-(D-ribitylamino)uracil: step 1/2.</text>
</comment>
<comment type="subunit">
    <text evidence="1">Homopentamer.</text>
</comment>
<comment type="similarity">
    <text evidence="1">Belongs to the DMRL synthase family.</text>
</comment>
<protein>
    <recommendedName>
        <fullName evidence="1">6,7-dimethyl-8-ribityllumazine synthase</fullName>
        <shortName evidence="1">DMRL synthase</shortName>
        <shortName evidence="1">LS</shortName>
        <shortName evidence="1">Lumazine synthase</shortName>
        <ecNumber evidence="1">2.5.1.78</ecNumber>
    </recommendedName>
</protein>
<evidence type="ECO:0000255" key="1">
    <source>
        <dbReference type="HAMAP-Rule" id="MF_00178"/>
    </source>
</evidence>
<keyword id="KW-0686">Riboflavin biosynthesis</keyword>
<keyword id="KW-0808">Transferase</keyword>
<reference key="1">
    <citation type="submission" date="2007-02" db="EMBL/GenBank/DDBJ databases">
        <title>Complete sequence of Mycobacterium sp. JLS.</title>
        <authorList>
            <consortium name="US DOE Joint Genome Institute"/>
            <person name="Copeland A."/>
            <person name="Lucas S."/>
            <person name="Lapidus A."/>
            <person name="Barry K."/>
            <person name="Detter J.C."/>
            <person name="Glavina del Rio T."/>
            <person name="Hammon N."/>
            <person name="Israni S."/>
            <person name="Dalin E."/>
            <person name="Tice H."/>
            <person name="Pitluck S."/>
            <person name="Chain P."/>
            <person name="Malfatti S."/>
            <person name="Shin M."/>
            <person name="Vergez L."/>
            <person name="Schmutz J."/>
            <person name="Larimer F."/>
            <person name="Land M."/>
            <person name="Hauser L."/>
            <person name="Kyrpides N."/>
            <person name="Mikhailova N."/>
            <person name="Miller C.D."/>
            <person name="Anderson A.J."/>
            <person name="Sims R.C."/>
            <person name="Richardson P."/>
        </authorList>
    </citation>
    <scope>NUCLEOTIDE SEQUENCE [LARGE SCALE GENOMIC DNA]</scope>
    <source>
        <strain>JLS</strain>
    </source>
</reference>
<sequence>MSGGAGVPDLPQIDASGMKVGIVASTWHSTICDALLDGALKVTESANVSEPTVVRVLGAIEIPVVAQALAADHEAVIALGVVIRGQTPHFDYVCDAVTQGLTRVSLDASTPVANGVLTTNTEEQALDRAGLPGSAEDKGAQAAAAALSTALTLQGLRGRS</sequence>